<feature type="chain" id="PRO_0000274325" description="Uncharacterized protein C11orf71">
    <location>
        <begin position="1"/>
        <end position="123"/>
    </location>
</feature>
<feature type="region of interest" description="Disordered" evidence="1">
    <location>
        <begin position="1"/>
        <end position="25"/>
    </location>
</feature>
<feature type="region of interest" description="Disordered" evidence="1">
    <location>
        <begin position="53"/>
        <end position="91"/>
    </location>
</feature>
<feature type="compositionally biased region" description="Polar residues" evidence="1">
    <location>
        <begin position="1"/>
        <end position="12"/>
    </location>
</feature>
<feature type="compositionally biased region" description="Basic and acidic residues" evidence="1">
    <location>
        <begin position="61"/>
        <end position="82"/>
    </location>
</feature>
<feature type="splice variant" id="VSP_022711" description="In isoform 2." evidence="2">
    <original>GVIAARISV</original>
    <variation>VTTWTLKLSESATPDLRWCSTCSHSNIFEILVI</variation>
    <location>
        <begin position="115"/>
        <end position="123"/>
    </location>
</feature>
<feature type="sequence conflict" description="In Ref. 1; CAG33503." evidence="3" ref="1">
    <original>A</original>
    <variation>V</variation>
    <location>
        <position position="30"/>
    </location>
</feature>
<reference key="1">
    <citation type="submission" date="2004-06" db="EMBL/GenBank/DDBJ databases">
        <title>Cloning of human full open reading frames in Gateway(TM) system entry vector (pDONR201).</title>
        <authorList>
            <person name="Ebert L."/>
            <person name="Schick M."/>
            <person name="Neubert P."/>
            <person name="Schatten R."/>
            <person name="Henze S."/>
            <person name="Korn B."/>
        </authorList>
    </citation>
    <scope>NUCLEOTIDE SEQUENCE [LARGE SCALE MRNA] (ISOFORM 1)</scope>
</reference>
<reference key="2">
    <citation type="journal article" date="2004" name="Nat. Genet.">
        <title>Complete sequencing and characterization of 21,243 full-length human cDNAs.</title>
        <authorList>
            <person name="Ota T."/>
            <person name="Suzuki Y."/>
            <person name="Nishikawa T."/>
            <person name="Otsuki T."/>
            <person name="Sugiyama T."/>
            <person name="Irie R."/>
            <person name="Wakamatsu A."/>
            <person name="Hayashi K."/>
            <person name="Sato H."/>
            <person name="Nagai K."/>
            <person name="Kimura K."/>
            <person name="Makita H."/>
            <person name="Sekine M."/>
            <person name="Obayashi M."/>
            <person name="Nishi T."/>
            <person name="Shibahara T."/>
            <person name="Tanaka T."/>
            <person name="Ishii S."/>
            <person name="Yamamoto J."/>
            <person name="Saito K."/>
            <person name="Kawai Y."/>
            <person name="Isono Y."/>
            <person name="Nakamura Y."/>
            <person name="Nagahari K."/>
            <person name="Murakami K."/>
            <person name="Yasuda T."/>
            <person name="Iwayanagi T."/>
            <person name="Wagatsuma M."/>
            <person name="Shiratori A."/>
            <person name="Sudo H."/>
            <person name="Hosoiri T."/>
            <person name="Kaku Y."/>
            <person name="Kodaira H."/>
            <person name="Kondo H."/>
            <person name="Sugawara M."/>
            <person name="Takahashi M."/>
            <person name="Kanda K."/>
            <person name="Yokoi T."/>
            <person name="Furuya T."/>
            <person name="Kikkawa E."/>
            <person name="Omura Y."/>
            <person name="Abe K."/>
            <person name="Kamihara K."/>
            <person name="Katsuta N."/>
            <person name="Sato K."/>
            <person name="Tanikawa M."/>
            <person name="Yamazaki M."/>
            <person name="Ninomiya K."/>
            <person name="Ishibashi T."/>
            <person name="Yamashita H."/>
            <person name="Murakawa K."/>
            <person name="Fujimori K."/>
            <person name="Tanai H."/>
            <person name="Kimata M."/>
            <person name="Watanabe M."/>
            <person name="Hiraoka S."/>
            <person name="Chiba Y."/>
            <person name="Ishida S."/>
            <person name="Ono Y."/>
            <person name="Takiguchi S."/>
            <person name="Watanabe S."/>
            <person name="Yosida M."/>
            <person name="Hotuta T."/>
            <person name="Kusano J."/>
            <person name="Kanehori K."/>
            <person name="Takahashi-Fujii A."/>
            <person name="Hara H."/>
            <person name="Tanase T.-O."/>
            <person name="Nomura Y."/>
            <person name="Togiya S."/>
            <person name="Komai F."/>
            <person name="Hara R."/>
            <person name="Takeuchi K."/>
            <person name="Arita M."/>
            <person name="Imose N."/>
            <person name="Musashino K."/>
            <person name="Yuuki H."/>
            <person name="Oshima A."/>
            <person name="Sasaki N."/>
            <person name="Aotsuka S."/>
            <person name="Yoshikawa Y."/>
            <person name="Matsunawa H."/>
            <person name="Ichihara T."/>
            <person name="Shiohata N."/>
            <person name="Sano S."/>
            <person name="Moriya S."/>
            <person name="Momiyama H."/>
            <person name="Satoh N."/>
            <person name="Takami S."/>
            <person name="Terashima Y."/>
            <person name="Suzuki O."/>
            <person name="Nakagawa S."/>
            <person name="Senoh A."/>
            <person name="Mizoguchi H."/>
            <person name="Goto Y."/>
            <person name="Shimizu F."/>
            <person name="Wakebe H."/>
            <person name="Hishigaki H."/>
            <person name="Watanabe T."/>
            <person name="Sugiyama A."/>
            <person name="Takemoto M."/>
            <person name="Kawakami B."/>
            <person name="Yamazaki M."/>
            <person name="Watanabe K."/>
            <person name="Kumagai A."/>
            <person name="Itakura S."/>
            <person name="Fukuzumi Y."/>
            <person name="Fujimori Y."/>
            <person name="Komiyama M."/>
            <person name="Tashiro H."/>
            <person name="Tanigami A."/>
            <person name="Fujiwara T."/>
            <person name="Ono T."/>
            <person name="Yamada K."/>
            <person name="Fujii Y."/>
            <person name="Ozaki K."/>
            <person name="Hirao M."/>
            <person name="Ohmori Y."/>
            <person name="Kawabata A."/>
            <person name="Hikiji T."/>
            <person name="Kobatake N."/>
            <person name="Inagaki H."/>
            <person name="Ikema Y."/>
            <person name="Okamoto S."/>
            <person name="Okitani R."/>
            <person name="Kawakami T."/>
            <person name="Noguchi S."/>
            <person name="Itoh T."/>
            <person name="Shigeta K."/>
            <person name="Senba T."/>
            <person name="Matsumura K."/>
            <person name="Nakajima Y."/>
            <person name="Mizuno T."/>
            <person name="Morinaga M."/>
            <person name="Sasaki M."/>
            <person name="Togashi T."/>
            <person name="Oyama M."/>
            <person name="Hata H."/>
            <person name="Watanabe M."/>
            <person name="Komatsu T."/>
            <person name="Mizushima-Sugano J."/>
            <person name="Satoh T."/>
            <person name="Shirai Y."/>
            <person name="Takahashi Y."/>
            <person name="Nakagawa K."/>
            <person name="Okumura K."/>
            <person name="Nagase T."/>
            <person name="Nomura N."/>
            <person name="Kikuchi H."/>
            <person name="Masuho Y."/>
            <person name="Yamashita R."/>
            <person name="Nakai K."/>
            <person name="Yada T."/>
            <person name="Nakamura Y."/>
            <person name="Ohara O."/>
            <person name="Isogai T."/>
            <person name="Sugano S."/>
        </authorList>
    </citation>
    <scope>NUCLEOTIDE SEQUENCE [LARGE SCALE MRNA] (ISOFORM 1)</scope>
    <source>
        <tissue>Adipose tissue</tissue>
    </source>
</reference>
<reference key="3">
    <citation type="journal article" date="2004" name="Genome Res.">
        <title>The status, quality, and expansion of the NIH full-length cDNA project: the Mammalian Gene Collection (MGC).</title>
        <authorList>
            <consortium name="The MGC Project Team"/>
        </authorList>
    </citation>
    <scope>NUCLEOTIDE SEQUENCE [LARGE SCALE MRNA] (ISOFORMS 1 AND 2)</scope>
    <source>
        <tissue>Eye</tissue>
        <tissue>Mammary gland</tissue>
    </source>
</reference>
<proteinExistence type="evidence at transcript level"/>
<protein>
    <recommendedName>
        <fullName>Uncharacterized protein C11orf71</fullName>
    </recommendedName>
</protein>
<sequence>MALNNVSLSSGDQRSRVAYRSSHGDLRPRASALAMVSGDGFLVSRPEAIHLGPRQAVRPSVRAESRRVDGGGRSPREPDGRGRSRQARFSPYPIPAVEPDLLRSVLQQRLIALGGVIAARISV</sequence>
<gene>
    <name type="primary">C11orf71</name>
</gene>
<accession>Q6IPW1</accession>
<accession>Q6IAD3</accession>
<accession>Q9NXX1</accession>
<organism>
    <name type="scientific">Homo sapiens</name>
    <name type="common">Human</name>
    <dbReference type="NCBI Taxonomy" id="9606"/>
    <lineage>
        <taxon>Eukaryota</taxon>
        <taxon>Metazoa</taxon>
        <taxon>Chordata</taxon>
        <taxon>Craniata</taxon>
        <taxon>Vertebrata</taxon>
        <taxon>Euteleostomi</taxon>
        <taxon>Mammalia</taxon>
        <taxon>Eutheria</taxon>
        <taxon>Euarchontoglires</taxon>
        <taxon>Primates</taxon>
        <taxon>Haplorrhini</taxon>
        <taxon>Catarrhini</taxon>
        <taxon>Hominidae</taxon>
        <taxon>Homo</taxon>
    </lineage>
</organism>
<comment type="alternative products">
    <event type="alternative splicing"/>
    <isoform>
        <id>Q6IPW1-1</id>
        <name>1</name>
        <sequence type="displayed"/>
    </isoform>
    <isoform>
        <id>Q6IPW1-2</id>
        <name>2</name>
        <sequence type="described" ref="VSP_022711"/>
    </isoform>
</comment>
<keyword id="KW-0025">Alternative splicing</keyword>
<keyword id="KW-1185">Reference proteome</keyword>
<name>CK071_HUMAN</name>
<evidence type="ECO:0000256" key="1">
    <source>
        <dbReference type="SAM" id="MobiDB-lite"/>
    </source>
</evidence>
<evidence type="ECO:0000303" key="2">
    <source>
    </source>
</evidence>
<evidence type="ECO:0000305" key="3"/>
<dbReference type="EMBL" id="CR457222">
    <property type="protein sequence ID" value="CAG33503.1"/>
    <property type="molecule type" value="mRNA"/>
</dbReference>
<dbReference type="EMBL" id="AK000017">
    <property type="protein sequence ID" value="BAA90886.1"/>
    <property type="molecule type" value="mRNA"/>
</dbReference>
<dbReference type="EMBL" id="BC009041">
    <property type="protein sequence ID" value="AAH09041.1"/>
    <property type="molecule type" value="mRNA"/>
</dbReference>
<dbReference type="EMBL" id="BC071695">
    <property type="protein sequence ID" value="AAH71695.1"/>
    <property type="molecule type" value="mRNA"/>
</dbReference>
<dbReference type="CCDS" id="CCDS76479.1">
    <molecule id="Q6IPW1-1"/>
</dbReference>
<dbReference type="CCDS" id="CCDS8369.2">
    <molecule id="Q6IPW1-2"/>
</dbReference>
<dbReference type="RefSeq" id="NP_001258491.1">
    <molecule id="Q6IPW1-1"/>
    <property type="nucleotide sequence ID" value="NM_001271562.2"/>
</dbReference>
<dbReference type="RefSeq" id="NP_061894.2">
    <molecule id="Q6IPW1-2"/>
    <property type="nucleotide sequence ID" value="NM_019021.4"/>
</dbReference>
<dbReference type="SMR" id="Q6IPW1"/>
<dbReference type="BioGRID" id="119990">
    <property type="interactions" value="11"/>
</dbReference>
<dbReference type="FunCoup" id="Q6IPW1">
    <property type="interactions" value="499"/>
</dbReference>
<dbReference type="IntAct" id="Q6IPW1">
    <property type="interactions" value="7"/>
</dbReference>
<dbReference type="STRING" id="9606.ENSP00000325508"/>
<dbReference type="iPTMnet" id="Q6IPW1"/>
<dbReference type="PhosphoSitePlus" id="Q6IPW1"/>
<dbReference type="BioMuta" id="C11orf71"/>
<dbReference type="MassIVE" id="Q6IPW1"/>
<dbReference type="PaxDb" id="9606-ENSP00000325508"/>
<dbReference type="PeptideAtlas" id="Q6IPW1"/>
<dbReference type="Antibodypedia" id="54330">
    <property type="antibodies" value="39 antibodies from 5 providers"/>
</dbReference>
<dbReference type="DNASU" id="54494"/>
<dbReference type="Ensembl" id="ENST00000325636.8">
    <molecule id="Q6IPW1-2"/>
    <property type="protein sequence ID" value="ENSP00000325508.4"/>
    <property type="gene ID" value="ENSG00000180425.11"/>
</dbReference>
<dbReference type="Ensembl" id="ENST00000623205.2">
    <molecule id="Q6IPW1-1"/>
    <property type="protein sequence ID" value="ENSP00000492536.1"/>
    <property type="gene ID" value="ENSG00000180425.11"/>
</dbReference>
<dbReference type="GeneID" id="54494"/>
<dbReference type="KEGG" id="hsa:54494"/>
<dbReference type="MANE-Select" id="ENST00000623205.2">
    <property type="protein sequence ID" value="ENSP00000492536.1"/>
    <property type="RefSeq nucleotide sequence ID" value="NM_001271562.2"/>
    <property type="RefSeq protein sequence ID" value="NP_001258491.1"/>
</dbReference>
<dbReference type="UCSC" id="uc001pot.3">
    <molecule id="Q6IPW1-1"/>
    <property type="organism name" value="human"/>
</dbReference>
<dbReference type="AGR" id="HGNC:25937"/>
<dbReference type="CTD" id="54494"/>
<dbReference type="GeneCards" id="C11orf71"/>
<dbReference type="HGNC" id="HGNC:25937">
    <property type="gene designation" value="C11orf71"/>
</dbReference>
<dbReference type="HPA" id="ENSG00000180425">
    <property type="expression patterns" value="Tissue enriched (testis)"/>
</dbReference>
<dbReference type="neXtProt" id="NX_Q6IPW1"/>
<dbReference type="OpenTargets" id="ENSG00000180425"/>
<dbReference type="PharmGKB" id="PA144596490"/>
<dbReference type="VEuPathDB" id="HostDB:ENSG00000180425"/>
<dbReference type="eggNOG" id="ENOG502TDVE">
    <property type="taxonomic scope" value="Eukaryota"/>
</dbReference>
<dbReference type="GeneTree" id="ENSGT00390000007962"/>
<dbReference type="HOGENOM" id="CLU_149706_0_0_1"/>
<dbReference type="InParanoid" id="Q6IPW1"/>
<dbReference type="OMA" id="LRWCSTC"/>
<dbReference type="OrthoDB" id="9681738at2759"/>
<dbReference type="PAN-GO" id="Q6IPW1">
    <property type="GO annotations" value="1 GO annotation based on evolutionary models"/>
</dbReference>
<dbReference type="PhylomeDB" id="Q6IPW1"/>
<dbReference type="TreeFam" id="TF337033"/>
<dbReference type="PathwayCommons" id="Q6IPW1"/>
<dbReference type="SignaLink" id="Q6IPW1"/>
<dbReference type="BioGRID-ORCS" id="54494">
    <property type="hits" value="9 hits in 1133 CRISPR screens"/>
</dbReference>
<dbReference type="ChiTaRS" id="C11orf71">
    <property type="organism name" value="human"/>
</dbReference>
<dbReference type="GenomeRNAi" id="54494"/>
<dbReference type="Pharos" id="Q6IPW1">
    <property type="development level" value="Tdark"/>
</dbReference>
<dbReference type="PRO" id="PR:Q6IPW1"/>
<dbReference type="Proteomes" id="UP000005640">
    <property type="component" value="Chromosome 11"/>
</dbReference>
<dbReference type="RNAct" id="Q6IPW1">
    <property type="molecule type" value="protein"/>
</dbReference>
<dbReference type="Bgee" id="ENSG00000180425">
    <property type="expression patterns" value="Expressed in sperm and 186 other cell types or tissues"/>
</dbReference>
<dbReference type="ExpressionAtlas" id="Q6IPW1">
    <property type="expression patterns" value="baseline and differential"/>
</dbReference>
<dbReference type="InterPro" id="IPR031487">
    <property type="entry name" value="DUF4687"/>
</dbReference>
<dbReference type="PANTHER" id="PTHR16445:SF0">
    <property type="entry name" value="GENE 5617-RELATED"/>
    <property type="match status" value="1"/>
</dbReference>
<dbReference type="PANTHER" id="PTHR16445">
    <property type="entry name" value="SIMILAR TO HYPOTHETICAL PROTEIN FLJ20010"/>
    <property type="match status" value="1"/>
</dbReference>
<dbReference type="Pfam" id="PF15747">
    <property type="entry name" value="DUF4687"/>
    <property type="match status" value="1"/>
</dbReference>